<reference key="1">
    <citation type="journal article" date="2007" name="PLoS ONE">
        <title>Paradoxical DNA repair and peroxide resistance gene conservation in Bacillus pumilus SAFR-032.</title>
        <authorList>
            <person name="Gioia J."/>
            <person name="Yerrapragada S."/>
            <person name="Qin X."/>
            <person name="Jiang H."/>
            <person name="Igboeli O.C."/>
            <person name="Muzny D."/>
            <person name="Dugan-Rocha S."/>
            <person name="Ding Y."/>
            <person name="Hawes A."/>
            <person name="Liu W."/>
            <person name="Perez L."/>
            <person name="Kovar C."/>
            <person name="Dinh H."/>
            <person name="Lee S."/>
            <person name="Nazareth L."/>
            <person name="Blyth P."/>
            <person name="Holder M."/>
            <person name="Buhay C."/>
            <person name="Tirumalai M.R."/>
            <person name="Liu Y."/>
            <person name="Dasgupta I."/>
            <person name="Bokhetache L."/>
            <person name="Fujita M."/>
            <person name="Karouia F."/>
            <person name="Eswara Moorthy P."/>
            <person name="Siefert J."/>
            <person name="Uzman A."/>
            <person name="Buzumbo P."/>
            <person name="Verma A."/>
            <person name="Zwiya H."/>
            <person name="McWilliams B.D."/>
            <person name="Olowu A."/>
            <person name="Clinkenbeard K.D."/>
            <person name="Newcombe D."/>
            <person name="Golebiewski L."/>
            <person name="Petrosino J.F."/>
            <person name="Nicholson W.L."/>
            <person name="Fox G.E."/>
            <person name="Venkateswaran K."/>
            <person name="Highlander S.K."/>
            <person name="Weinstock G.M."/>
        </authorList>
    </citation>
    <scope>NUCLEOTIDE SEQUENCE [LARGE SCALE GENOMIC DNA]</scope>
    <source>
        <strain>SAFR-032</strain>
    </source>
</reference>
<keyword id="KW-0963">Cytoplasm</keyword>
<keyword id="KW-0342">GTP-binding</keyword>
<keyword id="KW-0396">Initiation factor</keyword>
<keyword id="KW-0547">Nucleotide-binding</keyword>
<keyword id="KW-0648">Protein biosynthesis</keyword>
<organism>
    <name type="scientific">Bacillus pumilus (strain SAFR-032)</name>
    <dbReference type="NCBI Taxonomy" id="315750"/>
    <lineage>
        <taxon>Bacteria</taxon>
        <taxon>Bacillati</taxon>
        <taxon>Bacillota</taxon>
        <taxon>Bacilli</taxon>
        <taxon>Bacillales</taxon>
        <taxon>Bacillaceae</taxon>
        <taxon>Bacillus</taxon>
    </lineage>
</organism>
<gene>
    <name evidence="2" type="primary">infB</name>
    <name type="ordered locus">BPUM_1566</name>
</gene>
<feature type="chain" id="PRO_1000057651" description="Translation initiation factor IF-2">
    <location>
        <begin position="1"/>
        <end position="706"/>
    </location>
</feature>
<feature type="domain" description="tr-type G">
    <location>
        <begin position="207"/>
        <end position="376"/>
    </location>
</feature>
<feature type="region of interest" description="Disordered" evidence="3">
    <location>
        <begin position="55"/>
        <end position="127"/>
    </location>
</feature>
<feature type="region of interest" description="G1" evidence="1">
    <location>
        <begin position="216"/>
        <end position="223"/>
    </location>
</feature>
<feature type="region of interest" description="G2" evidence="1">
    <location>
        <begin position="241"/>
        <end position="245"/>
    </location>
</feature>
<feature type="region of interest" description="G3" evidence="1">
    <location>
        <begin position="262"/>
        <end position="265"/>
    </location>
</feature>
<feature type="region of interest" description="G4" evidence="1">
    <location>
        <begin position="316"/>
        <end position="319"/>
    </location>
</feature>
<feature type="region of interest" description="G5" evidence="1">
    <location>
        <begin position="352"/>
        <end position="354"/>
    </location>
</feature>
<feature type="compositionally biased region" description="Basic and acidic residues" evidence="3">
    <location>
        <begin position="55"/>
        <end position="81"/>
    </location>
</feature>
<feature type="compositionally biased region" description="Low complexity" evidence="3">
    <location>
        <begin position="82"/>
        <end position="98"/>
    </location>
</feature>
<feature type="binding site" evidence="2">
    <location>
        <begin position="216"/>
        <end position="223"/>
    </location>
    <ligand>
        <name>GTP</name>
        <dbReference type="ChEBI" id="CHEBI:37565"/>
    </ligand>
</feature>
<feature type="binding site" evidence="2">
    <location>
        <begin position="262"/>
        <end position="266"/>
    </location>
    <ligand>
        <name>GTP</name>
        <dbReference type="ChEBI" id="CHEBI:37565"/>
    </ligand>
</feature>
<feature type="binding site" evidence="2">
    <location>
        <begin position="316"/>
        <end position="319"/>
    </location>
    <ligand>
        <name>GTP</name>
        <dbReference type="ChEBI" id="CHEBI:37565"/>
    </ligand>
</feature>
<evidence type="ECO:0000250" key="1"/>
<evidence type="ECO:0000255" key="2">
    <source>
        <dbReference type="HAMAP-Rule" id="MF_00100"/>
    </source>
</evidence>
<evidence type="ECO:0000256" key="3">
    <source>
        <dbReference type="SAM" id="MobiDB-lite"/>
    </source>
</evidence>
<proteinExistence type="inferred from homology"/>
<name>IF2_BACP2</name>
<accession>A8FDD1</accession>
<comment type="function">
    <text evidence="2">One of the essential components for the initiation of protein synthesis. Protects formylmethionyl-tRNA from spontaneous hydrolysis and promotes its binding to the 30S ribosomal subunits. Also involved in the hydrolysis of GTP during the formation of the 70S ribosomal complex.</text>
</comment>
<comment type="subcellular location">
    <subcellularLocation>
        <location evidence="2">Cytoplasm</location>
    </subcellularLocation>
</comment>
<comment type="similarity">
    <text evidence="2">Belongs to the TRAFAC class translation factor GTPase superfamily. Classic translation factor GTPase family. IF-2 subfamily.</text>
</comment>
<protein>
    <recommendedName>
        <fullName evidence="2">Translation initiation factor IF-2</fullName>
    </recommendedName>
</protein>
<sequence>MAKVRVYEYAKAIDVSSKDIIAALKDMNVEVNNHMATLEDDTVKKLDAIYKKAKAKETANEKPAEQKKQSSNKINDRKKNDVQNNQFNKNKKNNNQNKNKNKRGGNNKSQHQQARPVKPKKELPEKIEFTNSMTVGQLAEELGKETAEIIKKLMMLGVMATINQELDKDTVELIASEYGVPVEEVIILEETELEKYEVEDKEEDMQVRPPVVTIMGHVDHGKTTLLDSIRKTKVVEGEAGGITQHIGAYQIEENGKKITFLDTPGHAAFTTMRARGAEVTDTTILVVAADDGVMPQTVEAINHAKAAEVPIIVAVNKIDKPTANPDRVMQELTEHGLVPEAWGGETIFVPLSAKTGEGIDELIEMILLVSEVGELKANPNRAAKGTVIEAELDKGRGSVATLLVQTGTLHVGDPIVVGNTFGRVRAMVNDIGRRVKTAGPSTPVEITGLNDVPNAGDQFLVFKDEKTARQVGEARASKQLDEQRSDKAKLSLDDLFEQIKQGEVKDINLIVKADVQGSAEALTAALQKIEVEGVKVKIIHTGVGAITESDIILASASNAIVIGFNVRPDGNAKSTAETENVDIRLHRIIYKVIDEIEAAMKGMLDPEYEEKVIGQVEVRQTFKVSKIGTIAGGYVTEGTITRDSGIRLIRDGVVIFEGEVDVLKRFKDDVKEVSQGYECGITIKKYNDIREGDVMESFVMQEIERK</sequence>
<dbReference type="EMBL" id="CP000813">
    <property type="protein sequence ID" value="ABV62248.1"/>
    <property type="molecule type" value="Genomic_DNA"/>
</dbReference>
<dbReference type="RefSeq" id="WP_012009993.1">
    <property type="nucleotide sequence ID" value="NZ_VEIC01000002.1"/>
</dbReference>
<dbReference type="SMR" id="A8FDD1"/>
<dbReference type="STRING" id="315750.BPUM_1566"/>
<dbReference type="GeneID" id="5620829"/>
<dbReference type="KEGG" id="bpu:BPUM_1566"/>
<dbReference type="eggNOG" id="COG0532">
    <property type="taxonomic scope" value="Bacteria"/>
</dbReference>
<dbReference type="HOGENOM" id="CLU_006301_5_1_9"/>
<dbReference type="OrthoDB" id="9811804at2"/>
<dbReference type="Proteomes" id="UP000001355">
    <property type="component" value="Chromosome"/>
</dbReference>
<dbReference type="GO" id="GO:0005829">
    <property type="term" value="C:cytosol"/>
    <property type="evidence" value="ECO:0007669"/>
    <property type="project" value="TreeGrafter"/>
</dbReference>
<dbReference type="GO" id="GO:0005525">
    <property type="term" value="F:GTP binding"/>
    <property type="evidence" value="ECO:0007669"/>
    <property type="project" value="UniProtKB-KW"/>
</dbReference>
<dbReference type="GO" id="GO:0003924">
    <property type="term" value="F:GTPase activity"/>
    <property type="evidence" value="ECO:0007669"/>
    <property type="project" value="UniProtKB-UniRule"/>
</dbReference>
<dbReference type="GO" id="GO:0003743">
    <property type="term" value="F:translation initiation factor activity"/>
    <property type="evidence" value="ECO:0007669"/>
    <property type="project" value="UniProtKB-UniRule"/>
</dbReference>
<dbReference type="CDD" id="cd01887">
    <property type="entry name" value="IF2_eIF5B"/>
    <property type="match status" value="1"/>
</dbReference>
<dbReference type="CDD" id="cd03702">
    <property type="entry name" value="IF2_mtIF2_II"/>
    <property type="match status" value="1"/>
</dbReference>
<dbReference type="CDD" id="cd03692">
    <property type="entry name" value="mtIF2_IVc"/>
    <property type="match status" value="1"/>
</dbReference>
<dbReference type="FunFam" id="2.40.30.10:FF:000007">
    <property type="entry name" value="Translation initiation factor IF-2"/>
    <property type="match status" value="1"/>
</dbReference>
<dbReference type="FunFam" id="2.40.30.10:FF:000008">
    <property type="entry name" value="Translation initiation factor IF-2"/>
    <property type="match status" value="1"/>
</dbReference>
<dbReference type="FunFam" id="3.40.50.10050:FF:000001">
    <property type="entry name" value="Translation initiation factor IF-2"/>
    <property type="match status" value="1"/>
</dbReference>
<dbReference type="FunFam" id="3.40.50.300:FF:000019">
    <property type="entry name" value="Translation initiation factor IF-2"/>
    <property type="match status" value="1"/>
</dbReference>
<dbReference type="Gene3D" id="1.10.10.2480">
    <property type="match status" value="1"/>
</dbReference>
<dbReference type="Gene3D" id="3.40.50.300">
    <property type="entry name" value="P-loop containing nucleotide triphosphate hydrolases"/>
    <property type="match status" value="1"/>
</dbReference>
<dbReference type="Gene3D" id="2.40.30.10">
    <property type="entry name" value="Translation factors"/>
    <property type="match status" value="2"/>
</dbReference>
<dbReference type="Gene3D" id="3.40.50.10050">
    <property type="entry name" value="Translation initiation factor IF- 2, domain 3"/>
    <property type="match status" value="1"/>
</dbReference>
<dbReference type="HAMAP" id="MF_00100_B">
    <property type="entry name" value="IF_2_B"/>
    <property type="match status" value="1"/>
</dbReference>
<dbReference type="InterPro" id="IPR053905">
    <property type="entry name" value="EF-G-like_DII"/>
</dbReference>
<dbReference type="InterPro" id="IPR004161">
    <property type="entry name" value="EFTu-like_2"/>
</dbReference>
<dbReference type="InterPro" id="IPR044145">
    <property type="entry name" value="IF2_II"/>
</dbReference>
<dbReference type="InterPro" id="IPR006847">
    <property type="entry name" value="IF2_N"/>
</dbReference>
<dbReference type="InterPro" id="IPR027417">
    <property type="entry name" value="P-loop_NTPase"/>
</dbReference>
<dbReference type="InterPro" id="IPR005225">
    <property type="entry name" value="Small_GTP-bd"/>
</dbReference>
<dbReference type="InterPro" id="IPR000795">
    <property type="entry name" value="T_Tr_GTP-bd_dom"/>
</dbReference>
<dbReference type="InterPro" id="IPR000178">
    <property type="entry name" value="TF_IF2_bacterial-like"/>
</dbReference>
<dbReference type="InterPro" id="IPR015760">
    <property type="entry name" value="TIF_IF2"/>
</dbReference>
<dbReference type="InterPro" id="IPR023115">
    <property type="entry name" value="TIF_IF2_dom3"/>
</dbReference>
<dbReference type="InterPro" id="IPR036925">
    <property type="entry name" value="TIF_IF2_dom3_sf"/>
</dbReference>
<dbReference type="InterPro" id="IPR009000">
    <property type="entry name" value="Transl_B-barrel_sf"/>
</dbReference>
<dbReference type="NCBIfam" id="TIGR00487">
    <property type="entry name" value="IF-2"/>
    <property type="match status" value="1"/>
</dbReference>
<dbReference type="NCBIfam" id="TIGR00231">
    <property type="entry name" value="small_GTP"/>
    <property type="match status" value="1"/>
</dbReference>
<dbReference type="PANTHER" id="PTHR43381:SF5">
    <property type="entry name" value="TR-TYPE G DOMAIN-CONTAINING PROTEIN"/>
    <property type="match status" value="1"/>
</dbReference>
<dbReference type="PANTHER" id="PTHR43381">
    <property type="entry name" value="TRANSLATION INITIATION FACTOR IF-2-RELATED"/>
    <property type="match status" value="1"/>
</dbReference>
<dbReference type="Pfam" id="PF22042">
    <property type="entry name" value="EF-G_D2"/>
    <property type="match status" value="1"/>
</dbReference>
<dbReference type="Pfam" id="PF00009">
    <property type="entry name" value="GTP_EFTU"/>
    <property type="match status" value="1"/>
</dbReference>
<dbReference type="Pfam" id="PF03144">
    <property type="entry name" value="GTP_EFTU_D2"/>
    <property type="match status" value="1"/>
</dbReference>
<dbReference type="Pfam" id="PF11987">
    <property type="entry name" value="IF-2"/>
    <property type="match status" value="1"/>
</dbReference>
<dbReference type="Pfam" id="PF04760">
    <property type="entry name" value="IF2_N"/>
    <property type="match status" value="2"/>
</dbReference>
<dbReference type="SUPFAM" id="SSF52156">
    <property type="entry name" value="Initiation factor IF2/eIF5b, domain 3"/>
    <property type="match status" value="1"/>
</dbReference>
<dbReference type="SUPFAM" id="SSF52540">
    <property type="entry name" value="P-loop containing nucleoside triphosphate hydrolases"/>
    <property type="match status" value="1"/>
</dbReference>
<dbReference type="SUPFAM" id="SSF50447">
    <property type="entry name" value="Translation proteins"/>
    <property type="match status" value="2"/>
</dbReference>
<dbReference type="PROSITE" id="PS51722">
    <property type="entry name" value="G_TR_2"/>
    <property type="match status" value="1"/>
</dbReference>
<dbReference type="PROSITE" id="PS01176">
    <property type="entry name" value="IF2"/>
    <property type="match status" value="1"/>
</dbReference>